<name>F16PA_ACIBT</name>
<reference key="1">
    <citation type="journal article" date="2007" name="Genes Dev.">
        <title>New insights into Acinetobacter baumannii pathogenesis revealed by high-density pyrosequencing and transposon mutagenesis.</title>
        <authorList>
            <person name="Smith M.G."/>
            <person name="Gianoulis T.A."/>
            <person name="Pukatzki S."/>
            <person name="Mekalanos J.J."/>
            <person name="Ornston L.N."/>
            <person name="Gerstein M."/>
            <person name="Snyder M."/>
        </authorList>
    </citation>
    <scope>NUCLEOTIDE SEQUENCE [LARGE SCALE GENOMIC DNA]</scope>
    <source>
        <strain>ATCC 17978 / DSM 105126 / CIP 53.77 / LMG 1025 / NCDC KC755 / 5377</strain>
    </source>
</reference>
<comment type="catalytic activity">
    <reaction evidence="1">
        <text>beta-D-fructose 1,6-bisphosphate + H2O = beta-D-fructose 6-phosphate + phosphate</text>
        <dbReference type="Rhea" id="RHEA:11064"/>
        <dbReference type="ChEBI" id="CHEBI:15377"/>
        <dbReference type="ChEBI" id="CHEBI:32966"/>
        <dbReference type="ChEBI" id="CHEBI:43474"/>
        <dbReference type="ChEBI" id="CHEBI:57634"/>
        <dbReference type="EC" id="3.1.3.11"/>
    </reaction>
</comment>
<comment type="cofactor">
    <cofactor evidence="1">
        <name>Mg(2+)</name>
        <dbReference type="ChEBI" id="CHEBI:18420"/>
    </cofactor>
    <text evidence="1">Binds 2 magnesium ions per subunit.</text>
</comment>
<comment type="pathway">
    <text evidence="1">Carbohydrate biosynthesis; gluconeogenesis.</text>
</comment>
<comment type="subunit">
    <text evidence="1">Homotetramer.</text>
</comment>
<comment type="subcellular location">
    <subcellularLocation>
        <location evidence="1">Cytoplasm</location>
    </subcellularLocation>
</comment>
<comment type="similarity">
    <text evidence="1">Belongs to the FBPase class 1 family.</text>
</comment>
<feature type="chain" id="PRO_0000364448" description="Fructose-1,6-bisphosphatase class 1">
    <location>
        <begin position="1"/>
        <end position="323"/>
    </location>
</feature>
<feature type="binding site" evidence="1">
    <location>
        <position position="88"/>
    </location>
    <ligand>
        <name>Mg(2+)</name>
        <dbReference type="ChEBI" id="CHEBI:18420"/>
        <label>1</label>
    </ligand>
</feature>
<feature type="binding site" evidence="1">
    <location>
        <position position="107"/>
    </location>
    <ligand>
        <name>Mg(2+)</name>
        <dbReference type="ChEBI" id="CHEBI:18420"/>
        <label>1</label>
    </ligand>
</feature>
<feature type="binding site" evidence="1">
    <location>
        <position position="107"/>
    </location>
    <ligand>
        <name>Mg(2+)</name>
        <dbReference type="ChEBI" id="CHEBI:18420"/>
        <label>2</label>
    </ligand>
</feature>
<feature type="binding site" evidence="1">
    <location>
        <position position="109"/>
    </location>
    <ligand>
        <name>Mg(2+)</name>
        <dbReference type="ChEBI" id="CHEBI:18420"/>
        <label>1</label>
    </ligand>
</feature>
<feature type="binding site" evidence="1">
    <location>
        <begin position="110"/>
        <end position="113"/>
    </location>
    <ligand>
        <name>substrate</name>
    </ligand>
</feature>
<feature type="binding site" evidence="1">
    <location>
        <position position="110"/>
    </location>
    <ligand>
        <name>Mg(2+)</name>
        <dbReference type="ChEBI" id="CHEBI:18420"/>
        <label>2</label>
    </ligand>
</feature>
<feature type="binding site" evidence="1">
    <location>
        <position position="200"/>
    </location>
    <ligand>
        <name>substrate</name>
    </ligand>
</feature>
<feature type="binding site" evidence="1">
    <location>
        <position position="272"/>
    </location>
    <ligand>
        <name>Mg(2+)</name>
        <dbReference type="ChEBI" id="CHEBI:18420"/>
        <label>2</label>
    </ligand>
</feature>
<accession>A3M7W9</accession>
<dbReference type="EC" id="3.1.3.11" evidence="1"/>
<dbReference type="EMBL" id="CP000521">
    <property type="protein sequence ID" value="ABO13013.2"/>
    <property type="molecule type" value="Genomic_DNA"/>
</dbReference>
<dbReference type="RefSeq" id="WP_049594876.1">
    <property type="nucleotide sequence ID" value="NZ_CACVBA010000001.1"/>
</dbReference>
<dbReference type="SMR" id="A3M7W9"/>
<dbReference type="KEGG" id="acb:A1S_2596"/>
<dbReference type="HOGENOM" id="CLU_039977_0_0_6"/>
<dbReference type="UniPathway" id="UPA00138"/>
<dbReference type="GO" id="GO:0005829">
    <property type="term" value="C:cytosol"/>
    <property type="evidence" value="ECO:0007669"/>
    <property type="project" value="TreeGrafter"/>
</dbReference>
<dbReference type="GO" id="GO:0042132">
    <property type="term" value="F:fructose 1,6-bisphosphate 1-phosphatase activity"/>
    <property type="evidence" value="ECO:0007669"/>
    <property type="project" value="UniProtKB-UniRule"/>
</dbReference>
<dbReference type="GO" id="GO:0000287">
    <property type="term" value="F:magnesium ion binding"/>
    <property type="evidence" value="ECO:0007669"/>
    <property type="project" value="UniProtKB-UniRule"/>
</dbReference>
<dbReference type="GO" id="GO:0030388">
    <property type="term" value="P:fructose 1,6-bisphosphate metabolic process"/>
    <property type="evidence" value="ECO:0007669"/>
    <property type="project" value="TreeGrafter"/>
</dbReference>
<dbReference type="GO" id="GO:0006002">
    <property type="term" value="P:fructose 6-phosphate metabolic process"/>
    <property type="evidence" value="ECO:0007669"/>
    <property type="project" value="TreeGrafter"/>
</dbReference>
<dbReference type="GO" id="GO:0006000">
    <property type="term" value="P:fructose metabolic process"/>
    <property type="evidence" value="ECO:0007669"/>
    <property type="project" value="TreeGrafter"/>
</dbReference>
<dbReference type="GO" id="GO:0006094">
    <property type="term" value="P:gluconeogenesis"/>
    <property type="evidence" value="ECO:0007669"/>
    <property type="project" value="UniProtKB-UniRule"/>
</dbReference>
<dbReference type="GO" id="GO:0005986">
    <property type="term" value="P:sucrose biosynthetic process"/>
    <property type="evidence" value="ECO:0007669"/>
    <property type="project" value="TreeGrafter"/>
</dbReference>
<dbReference type="CDD" id="cd00354">
    <property type="entry name" value="FBPase"/>
    <property type="match status" value="1"/>
</dbReference>
<dbReference type="FunFam" id="3.30.540.10:FF:000002">
    <property type="entry name" value="Fructose-1,6-bisphosphatase class 1"/>
    <property type="match status" value="1"/>
</dbReference>
<dbReference type="FunFam" id="3.40.190.80:FF:000011">
    <property type="entry name" value="Fructose-1,6-bisphosphatase class 1"/>
    <property type="match status" value="1"/>
</dbReference>
<dbReference type="Gene3D" id="3.40.190.80">
    <property type="match status" value="1"/>
</dbReference>
<dbReference type="Gene3D" id="3.30.540.10">
    <property type="entry name" value="Fructose-1,6-Bisphosphatase, subunit A, domain 1"/>
    <property type="match status" value="1"/>
</dbReference>
<dbReference type="HAMAP" id="MF_01855">
    <property type="entry name" value="FBPase_class1"/>
    <property type="match status" value="1"/>
</dbReference>
<dbReference type="InterPro" id="IPR044015">
    <property type="entry name" value="FBPase_C_dom"/>
</dbReference>
<dbReference type="InterPro" id="IPR000146">
    <property type="entry name" value="FBPase_class-1"/>
</dbReference>
<dbReference type="InterPro" id="IPR033391">
    <property type="entry name" value="FBPase_N"/>
</dbReference>
<dbReference type="InterPro" id="IPR028343">
    <property type="entry name" value="FBPtase"/>
</dbReference>
<dbReference type="NCBIfam" id="NF006779">
    <property type="entry name" value="PRK09293.1-3"/>
    <property type="match status" value="1"/>
</dbReference>
<dbReference type="NCBIfam" id="NF006780">
    <property type="entry name" value="PRK09293.1-4"/>
    <property type="match status" value="1"/>
</dbReference>
<dbReference type="PANTHER" id="PTHR11556">
    <property type="entry name" value="FRUCTOSE-1,6-BISPHOSPHATASE-RELATED"/>
    <property type="match status" value="1"/>
</dbReference>
<dbReference type="PANTHER" id="PTHR11556:SF35">
    <property type="entry name" value="SEDOHEPTULOSE-1,7-BISPHOSPHATASE, CHLOROPLASTIC"/>
    <property type="match status" value="1"/>
</dbReference>
<dbReference type="Pfam" id="PF00316">
    <property type="entry name" value="FBPase"/>
    <property type="match status" value="1"/>
</dbReference>
<dbReference type="Pfam" id="PF18913">
    <property type="entry name" value="FBPase_C"/>
    <property type="match status" value="1"/>
</dbReference>
<dbReference type="PIRSF" id="PIRSF500210">
    <property type="entry name" value="FBPtase"/>
    <property type="match status" value="1"/>
</dbReference>
<dbReference type="PIRSF" id="PIRSF000904">
    <property type="entry name" value="FBPtase_SBPase"/>
    <property type="match status" value="1"/>
</dbReference>
<dbReference type="PRINTS" id="PR00115">
    <property type="entry name" value="F16BPHPHTASE"/>
</dbReference>
<dbReference type="SUPFAM" id="SSF56655">
    <property type="entry name" value="Carbohydrate phosphatase"/>
    <property type="match status" value="1"/>
</dbReference>
<proteinExistence type="inferred from homology"/>
<gene>
    <name evidence="1" type="primary">fbp</name>
    <name type="ordered locus">A1S_2596</name>
</gene>
<sequence>MSNLTLSQFLQQEKGNLTPELAQVIDTIAATCKTIDQALQKGALAGILGSAGNENVQGETQKKLDVISNDYLIDALKVHPHVGGLASEELDDFTLAQENGEYLVLFDPLDGSSNIDINMCVGTIFSILPAKNAVTQAQDFMQAGTQQVAAGYVLYGPSTMMALTVGNGVAFFTLDPETQTFLLTTENVQVSADTQEFAINASNQRHWEQPVKQYIEELLAGKTSVREKDFNMRWVACMVGDVHRILCRGGIFLYPYDLKDPKKAGRLRLMYEANPMSMLIEQAGGASTTGRVRILEIEPTELHQRVPVIIGSKNEVERVTSYH</sequence>
<evidence type="ECO:0000255" key="1">
    <source>
        <dbReference type="HAMAP-Rule" id="MF_01855"/>
    </source>
</evidence>
<organism>
    <name type="scientific">Acinetobacter baumannii (strain ATCC 17978 / DSM 105126 / CIP 53.77 / LMG 1025 / NCDC KC755 / 5377)</name>
    <dbReference type="NCBI Taxonomy" id="400667"/>
    <lineage>
        <taxon>Bacteria</taxon>
        <taxon>Pseudomonadati</taxon>
        <taxon>Pseudomonadota</taxon>
        <taxon>Gammaproteobacteria</taxon>
        <taxon>Moraxellales</taxon>
        <taxon>Moraxellaceae</taxon>
        <taxon>Acinetobacter</taxon>
        <taxon>Acinetobacter calcoaceticus/baumannii complex</taxon>
    </lineage>
</organism>
<protein>
    <recommendedName>
        <fullName evidence="1">Fructose-1,6-bisphosphatase class 1</fullName>
        <shortName evidence="1">FBPase class 1</shortName>
        <ecNumber evidence="1">3.1.3.11</ecNumber>
    </recommendedName>
    <alternativeName>
        <fullName evidence="1">D-fructose-1,6-bisphosphate 1-phosphohydrolase class 1</fullName>
    </alternativeName>
</protein>
<keyword id="KW-0119">Carbohydrate metabolism</keyword>
<keyword id="KW-0963">Cytoplasm</keyword>
<keyword id="KW-0378">Hydrolase</keyword>
<keyword id="KW-0460">Magnesium</keyword>
<keyword id="KW-0479">Metal-binding</keyword>